<reference key="1">
    <citation type="journal article" date="2001" name="Science">
        <title>Mechanisms of evolution in Rickettsia conorii and R. prowazekii.</title>
        <authorList>
            <person name="Ogata H."/>
            <person name="Audic S."/>
            <person name="Renesto-Audiffren P."/>
            <person name="Fournier P.-E."/>
            <person name="Barbe V."/>
            <person name="Samson D."/>
            <person name="Roux V."/>
            <person name="Cossart P."/>
            <person name="Weissenbach J."/>
            <person name="Claverie J.-M."/>
            <person name="Raoult D."/>
        </authorList>
    </citation>
    <scope>NUCLEOTIDE SEQUENCE [LARGE SCALE GENOMIC DNA]</scope>
    <source>
        <strain>ATCC VR-613 / Malish 7</strain>
    </source>
</reference>
<keyword id="KW-0687">Ribonucleoprotein</keyword>
<keyword id="KW-0689">Ribosomal protein</keyword>
<keyword id="KW-0694">RNA-binding</keyword>
<keyword id="KW-0699">rRNA-binding</keyword>
<keyword id="KW-0820">tRNA-binding</keyword>
<protein>
    <recommendedName>
        <fullName evidence="1">Small ribosomal subunit protein uS7</fullName>
    </recommendedName>
    <alternativeName>
        <fullName evidence="2">30S ribosomal protein S7</fullName>
    </alternativeName>
</protein>
<evidence type="ECO:0000255" key="1">
    <source>
        <dbReference type="HAMAP-Rule" id="MF_00480"/>
    </source>
</evidence>
<evidence type="ECO:0000305" key="2"/>
<feature type="chain" id="PRO_0000124331" description="Small ribosomal subunit protein uS7">
    <location>
        <begin position="1"/>
        <end position="160"/>
    </location>
</feature>
<organism>
    <name type="scientific">Rickettsia conorii (strain ATCC VR-613 / Malish 7)</name>
    <dbReference type="NCBI Taxonomy" id="272944"/>
    <lineage>
        <taxon>Bacteria</taxon>
        <taxon>Pseudomonadati</taxon>
        <taxon>Pseudomonadota</taxon>
        <taxon>Alphaproteobacteria</taxon>
        <taxon>Rickettsiales</taxon>
        <taxon>Rickettsiaceae</taxon>
        <taxon>Rickettsieae</taxon>
        <taxon>Rickettsia</taxon>
        <taxon>spotted fever group</taxon>
    </lineage>
</organism>
<gene>
    <name evidence="1" type="primary">rpsG</name>
    <name type="ordered locus">RC0173</name>
</gene>
<comment type="function">
    <text evidence="1">One of the primary rRNA binding proteins, it binds directly to 16S rRNA where it nucleates assembly of the head domain of the 30S subunit. Is located at the subunit interface close to the decoding center, probably blocks exit of the E-site tRNA.</text>
</comment>
<comment type="subunit">
    <text evidence="1">Part of the 30S ribosomal subunit. Contacts proteins S9 and S11.</text>
</comment>
<comment type="similarity">
    <text evidence="1">Belongs to the universal ribosomal protein uS7 family.</text>
</comment>
<name>RS7_RICCN</name>
<dbReference type="EMBL" id="AE006914">
    <property type="protein sequence ID" value="AAL02711.1"/>
    <property type="molecule type" value="Genomic_DNA"/>
</dbReference>
<dbReference type="PIR" id="E97721">
    <property type="entry name" value="E97721"/>
</dbReference>
<dbReference type="RefSeq" id="WP_004996646.1">
    <property type="nucleotide sequence ID" value="NC_003103.1"/>
</dbReference>
<dbReference type="SMR" id="Q92J94"/>
<dbReference type="GeneID" id="95361888"/>
<dbReference type="KEGG" id="rco:RC0173"/>
<dbReference type="HOGENOM" id="CLU_072226_1_1_5"/>
<dbReference type="Proteomes" id="UP000000816">
    <property type="component" value="Chromosome"/>
</dbReference>
<dbReference type="GO" id="GO:0015935">
    <property type="term" value="C:small ribosomal subunit"/>
    <property type="evidence" value="ECO:0007669"/>
    <property type="project" value="InterPro"/>
</dbReference>
<dbReference type="GO" id="GO:0019843">
    <property type="term" value="F:rRNA binding"/>
    <property type="evidence" value="ECO:0007669"/>
    <property type="project" value="UniProtKB-UniRule"/>
</dbReference>
<dbReference type="GO" id="GO:0003735">
    <property type="term" value="F:structural constituent of ribosome"/>
    <property type="evidence" value="ECO:0007669"/>
    <property type="project" value="InterPro"/>
</dbReference>
<dbReference type="GO" id="GO:0000049">
    <property type="term" value="F:tRNA binding"/>
    <property type="evidence" value="ECO:0007669"/>
    <property type="project" value="UniProtKB-UniRule"/>
</dbReference>
<dbReference type="GO" id="GO:0006412">
    <property type="term" value="P:translation"/>
    <property type="evidence" value="ECO:0007669"/>
    <property type="project" value="UniProtKB-UniRule"/>
</dbReference>
<dbReference type="CDD" id="cd14869">
    <property type="entry name" value="uS7_Bacteria"/>
    <property type="match status" value="1"/>
</dbReference>
<dbReference type="FunFam" id="1.10.455.10:FF:000001">
    <property type="entry name" value="30S ribosomal protein S7"/>
    <property type="match status" value="1"/>
</dbReference>
<dbReference type="Gene3D" id="1.10.455.10">
    <property type="entry name" value="Ribosomal protein S7 domain"/>
    <property type="match status" value="1"/>
</dbReference>
<dbReference type="HAMAP" id="MF_00480_B">
    <property type="entry name" value="Ribosomal_uS7_B"/>
    <property type="match status" value="1"/>
</dbReference>
<dbReference type="InterPro" id="IPR000235">
    <property type="entry name" value="Ribosomal_uS7"/>
</dbReference>
<dbReference type="InterPro" id="IPR005717">
    <property type="entry name" value="Ribosomal_uS7_bac/org-type"/>
</dbReference>
<dbReference type="InterPro" id="IPR020606">
    <property type="entry name" value="Ribosomal_uS7_CS"/>
</dbReference>
<dbReference type="InterPro" id="IPR023798">
    <property type="entry name" value="Ribosomal_uS7_dom"/>
</dbReference>
<dbReference type="InterPro" id="IPR036823">
    <property type="entry name" value="Ribosomal_uS7_dom_sf"/>
</dbReference>
<dbReference type="NCBIfam" id="TIGR01029">
    <property type="entry name" value="rpsG_bact"/>
    <property type="match status" value="1"/>
</dbReference>
<dbReference type="PANTHER" id="PTHR11205">
    <property type="entry name" value="RIBOSOMAL PROTEIN S7"/>
    <property type="match status" value="1"/>
</dbReference>
<dbReference type="Pfam" id="PF00177">
    <property type="entry name" value="Ribosomal_S7"/>
    <property type="match status" value="1"/>
</dbReference>
<dbReference type="PIRSF" id="PIRSF002122">
    <property type="entry name" value="RPS7p_RPS7a_RPS5e_RPS7o"/>
    <property type="match status" value="1"/>
</dbReference>
<dbReference type="SUPFAM" id="SSF47973">
    <property type="entry name" value="Ribosomal protein S7"/>
    <property type="match status" value="1"/>
</dbReference>
<dbReference type="PROSITE" id="PS00052">
    <property type="entry name" value="RIBOSOMAL_S7"/>
    <property type="match status" value="1"/>
</dbReference>
<accession>Q92J94</accession>
<sequence length="160" mass="18442">MSRRHAAEKRVILPDMKYNSILLSRFINNIMKEGKKALAEKIVYSAFNKIEKKHRVDPYQTFNNAMHNVKPHLEVTSVRVGGANYQVPTHVDERRGYALASRWIINAASKRSEKMMIDKLAEELFEASNNRGVAIKKKEDTHKMAEANKAFSHFSPKKMK</sequence>
<proteinExistence type="inferred from homology"/>